<name>DAPF_RICB8</name>
<comment type="function">
    <text evidence="1">Catalyzes the stereoinversion of LL-2,6-diaminopimelate (L,L-DAP) to meso-diaminopimelate (meso-DAP), a precursor of L-lysine and an essential component of the bacterial peptidoglycan.</text>
</comment>
<comment type="catalytic activity">
    <reaction evidence="1">
        <text>(2S,6S)-2,6-diaminopimelate = meso-2,6-diaminopimelate</text>
        <dbReference type="Rhea" id="RHEA:15393"/>
        <dbReference type="ChEBI" id="CHEBI:57609"/>
        <dbReference type="ChEBI" id="CHEBI:57791"/>
        <dbReference type="EC" id="5.1.1.7"/>
    </reaction>
</comment>
<comment type="pathway">
    <text evidence="1">Amino-acid biosynthesis; L-lysine biosynthesis via DAP pathway; DL-2,6-diaminopimelate from LL-2,6-diaminopimelate: step 1/1.</text>
</comment>
<comment type="subunit">
    <text evidence="1">Homodimer.</text>
</comment>
<comment type="subcellular location">
    <subcellularLocation>
        <location evidence="1">Cytoplasm</location>
    </subcellularLocation>
</comment>
<comment type="similarity">
    <text evidence="1">Belongs to the diaminopimelate epimerase family.</text>
</comment>
<evidence type="ECO:0000255" key="1">
    <source>
        <dbReference type="HAMAP-Rule" id="MF_00197"/>
    </source>
</evidence>
<organism>
    <name type="scientific">Rickettsia bellii (strain OSU 85-389)</name>
    <dbReference type="NCBI Taxonomy" id="391896"/>
    <lineage>
        <taxon>Bacteria</taxon>
        <taxon>Pseudomonadati</taxon>
        <taxon>Pseudomonadota</taxon>
        <taxon>Alphaproteobacteria</taxon>
        <taxon>Rickettsiales</taxon>
        <taxon>Rickettsiaceae</taxon>
        <taxon>Rickettsieae</taxon>
        <taxon>Rickettsia</taxon>
        <taxon>belli group</taxon>
    </lineage>
</organism>
<reference key="1">
    <citation type="submission" date="2007-09" db="EMBL/GenBank/DDBJ databases">
        <title>Complete genome sequencing of Rickettsia bellii.</title>
        <authorList>
            <person name="Madan A."/>
            <person name="Lee H."/>
            <person name="Madan A."/>
            <person name="Yoon J.-G."/>
            <person name="Ryu G.-Y."/>
            <person name="Dasch G."/>
            <person name="Ereemeva M."/>
        </authorList>
    </citation>
    <scope>NUCLEOTIDE SEQUENCE [LARGE SCALE GENOMIC DNA]</scope>
    <source>
        <strain>OSU 85-389</strain>
    </source>
</reference>
<protein>
    <recommendedName>
        <fullName evidence="1">Diaminopimelate epimerase</fullName>
        <shortName evidence="1">DAP epimerase</shortName>
        <ecNumber evidence="1">5.1.1.7</ecNumber>
    </recommendedName>
    <alternativeName>
        <fullName evidence="1">PLP-independent amino acid racemase</fullName>
    </alternativeName>
</protein>
<sequence length="269" mass="29769">MSSKINFVKMHGLGNDFVIINKKDLTGTYDLSQLAKSMAKRHLGIGCDQFIIYEEQNDSYEMIIYNIDGSSAKLCGNATRCLAKLIYLDTGKKDITVVVGNKKLLCHVIDENNISVNVGGVSFNESWMPSRDKIWEFAERYMIDLKETICVDVGNPHLVIFSKLELQDQKIVGEKLQDKALFADGVNVNFAEVRDNKIYLSVWERGSGLTLACGSGACGSFAAGLKLGFIHSPCEVVFKHGSLIMKEENGNIIMQGPASLVAKGMYYCE</sequence>
<gene>
    <name evidence="1" type="primary">dapF</name>
    <name type="ordered locus">A1I_04280</name>
</gene>
<keyword id="KW-0028">Amino-acid biosynthesis</keyword>
<keyword id="KW-0963">Cytoplasm</keyword>
<keyword id="KW-0413">Isomerase</keyword>
<keyword id="KW-0457">Lysine biosynthesis</keyword>
<accession>A8GWH4</accession>
<feature type="chain" id="PRO_1000011953" description="Diaminopimelate epimerase">
    <location>
        <begin position="1"/>
        <end position="269"/>
    </location>
</feature>
<feature type="active site" description="Proton donor" evidence="1">
    <location>
        <position position="75"/>
    </location>
</feature>
<feature type="active site" description="Proton acceptor" evidence="1">
    <location>
        <position position="213"/>
    </location>
</feature>
<feature type="binding site" evidence="1">
    <location>
        <position position="15"/>
    </location>
    <ligand>
        <name>substrate</name>
    </ligand>
</feature>
<feature type="binding site" evidence="1">
    <location>
        <position position="49"/>
    </location>
    <ligand>
        <name>substrate</name>
    </ligand>
</feature>
<feature type="binding site" evidence="1">
    <location>
        <position position="66"/>
    </location>
    <ligand>
        <name>substrate</name>
    </ligand>
</feature>
<feature type="binding site" evidence="1">
    <location>
        <begin position="76"/>
        <end position="77"/>
    </location>
    <ligand>
        <name>substrate</name>
    </ligand>
</feature>
<feature type="binding site" evidence="1">
    <location>
        <position position="155"/>
    </location>
    <ligand>
        <name>substrate</name>
    </ligand>
</feature>
<feature type="binding site" evidence="1">
    <location>
        <position position="187"/>
    </location>
    <ligand>
        <name>substrate</name>
    </ligand>
</feature>
<feature type="binding site" evidence="1">
    <location>
        <begin position="204"/>
        <end position="205"/>
    </location>
    <ligand>
        <name>substrate</name>
    </ligand>
</feature>
<feature type="binding site" evidence="1">
    <location>
        <begin position="214"/>
        <end position="215"/>
    </location>
    <ligand>
        <name>substrate</name>
    </ligand>
</feature>
<feature type="site" description="Could be important to modulate the pK values of the two catalytic cysteine residues" evidence="1">
    <location>
        <position position="157"/>
    </location>
</feature>
<feature type="site" description="Could be important to modulate the pK values of the two catalytic cysteine residues" evidence="1">
    <location>
        <position position="204"/>
    </location>
</feature>
<proteinExistence type="inferred from homology"/>
<dbReference type="EC" id="5.1.1.7" evidence="1"/>
<dbReference type="EMBL" id="CP000849">
    <property type="protein sequence ID" value="ABV79201.1"/>
    <property type="molecule type" value="Genomic_DNA"/>
</dbReference>
<dbReference type="RefSeq" id="WP_011477321.1">
    <property type="nucleotide sequence ID" value="NC_009883.1"/>
</dbReference>
<dbReference type="SMR" id="A8GWH4"/>
<dbReference type="KEGG" id="rbo:A1I_04280"/>
<dbReference type="HOGENOM" id="CLU_053306_1_0_5"/>
<dbReference type="UniPathway" id="UPA00034">
    <property type="reaction ID" value="UER00025"/>
</dbReference>
<dbReference type="GO" id="GO:0005829">
    <property type="term" value="C:cytosol"/>
    <property type="evidence" value="ECO:0007669"/>
    <property type="project" value="TreeGrafter"/>
</dbReference>
<dbReference type="GO" id="GO:0008837">
    <property type="term" value="F:diaminopimelate epimerase activity"/>
    <property type="evidence" value="ECO:0007669"/>
    <property type="project" value="UniProtKB-UniRule"/>
</dbReference>
<dbReference type="GO" id="GO:0009089">
    <property type="term" value="P:lysine biosynthetic process via diaminopimelate"/>
    <property type="evidence" value="ECO:0007669"/>
    <property type="project" value="UniProtKB-UniRule"/>
</dbReference>
<dbReference type="Gene3D" id="3.10.310.10">
    <property type="entry name" value="Diaminopimelate Epimerase, Chain A, domain 1"/>
    <property type="match status" value="2"/>
</dbReference>
<dbReference type="HAMAP" id="MF_00197">
    <property type="entry name" value="DAP_epimerase"/>
    <property type="match status" value="1"/>
</dbReference>
<dbReference type="InterPro" id="IPR018510">
    <property type="entry name" value="DAP_epimerase_AS"/>
</dbReference>
<dbReference type="InterPro" id="IPR001653">
    <property type="entry name" value="DAP_epimerase_DapF"/>
</dbReference>
<dbReference type="NCBIfam" id="TIGR00652">
    <property type="entry name" value="DapF"/>
    <property type="match status" value="1"/>
</dbReference>
<dbReference type="PANTHER" id="PTHR31689:SF0">
    <property type="entry name" value="DIAMINOPIMELATE EPIMERASE"/>
    <property type="match status" value="1"/>
</dbReference>
<dbReference type="PANTHER" id="PTHR31689">
    <property type="entry name" value="DIAMINOPIMELATE EPIMERASE, CHLOROPLASTIC"/>
    <property type="match status" value="1"/>
</dbReference>
<dbReference type="Pfam" id="PF01678">
    <property type="entry name" value="DAP_epimerase"/>
    <property type="match status" value="2"/>
</dbReference>
<dbReference type="SUPFAM" id="SSF54506">
    <property type="entry name" value="Diaminopimelate epimerase-like"/>
    <property type="match status" value="2"/>
</dbReference>
<dbReference type="PROSITE" id="PS01326">
    <property type="entry name" value="DAP_EPIMERASE"/>
    <property type="match status" value="1"/>
</dbReference>